<evidence type="ECO:0000255" key="1"/>
<evidence type="ECO:0000305" key="2"/>
<feature type="chain" id="PRO_0000412172" description="Putative fused nickel transport protein NikMN">
    <location>
        <begin position="1"/>
        <end position="295"/>
    </location>
</feature>
<feature type="transmembrane region" description="Helical" evidence="1">
    <location>
        <begin position="8"/>
        <end position="28"/>
    </location>
</feature>
<feature type="transmembrane region" description="Helical" evidence="1">
    <location>
        <begin position="39"/>
        <end position="59"/>
    </location>
</feature>
<feature type="transmembrane region" description="Helical" evidence="1">
    <location>
        <begin position="70"/>
        <end position="90"/>
    </location>
</feature>
<feature type="transmembrane region" description="Helical" evidence="1">
    <location>
        <begin position="98"/>
        <end position="118"/>
    </location>
</feature>
<feature type="transmembrane region" description="Helical" evidence="1">
    <location>
        <begin position="135"/>
        <end position="155"/>
    </location>
</feature>
<feature type="transmembrane region" description="Helical" evidence="1">
    <location>
        <begin position="175"/>
        <end position="195"/>
    </location>
</feature>
<feature type="transmembrane region" description="Helical" evidence="1">
    <location>
        <begin position="211"/>
        <end position="231"/>
    </location>
</feature>
<feature type="transmembrane region" description="Helical" evidence="1">
    <location>
        <begin position="268"/>
        <end position="288"/>
    </location>
</feature>
<protein>
    <recommendedName>
        <fullName>Putative fused nickel transport protein NikMN</fullName>
    </recommendedName>
</protein>
<organism>
    <name type="scientific">Archaeoglobus fulgidus (strain ATCC 49558 / DSM 4304 / JCM 9628 / NBRC 100126 / VC-16)</name>
    <dbReference type="NCBI Taxonomy" id="224325"/>
    <lineage>
        <taxon>Archaea</taxon>
        <taxon>Methanobacteriati</taxon>
        <taxon>Methanobacteriota</taxon>
        <taxon>Archaeoglobi</taxon>
        <taxon>Archaeoglobales</taxon>
        <taxon>Archaeoglobaceae</taxon>
        <taxon>Archaeoglobus</taxon>
    </lineage>
</organism>
<keyword id="KW-1003">Cell membrane</keyword>
<keyword id="KW-0406">Ion transport</keyword>
<keyword id="KW-0472">Membrane</keyword>
<keyword id="KW-0533">Nickel</keyword>
<keyword id="KW-0921">Nickel transport</keyword>
<keyword id="KW-1185">Reference proteome</keyword>
<keyword id="KW-0812">Transmembrane</keyword>
<keyword id="KW-1133">Transmembrane helix</keyword>
<keyword id="KW-0813">Transport</keyword>
<name>NIKMN_ARCFU</name>
<gene>
    <name type="ordered locus">AF_1843</name>
</gene>
<accession>O28435</accession>
<comment type="function">
    <text>May be involved in nickel transport.</text>
</comment>
<comment type="subcellular location">
    <subcellularLocation>
        <location evidence="2">Cell membrane</location>
        <topology evidence="2">Multi-pass membrane protein</topology>
    </subcellularLocation>
</comment>
<comment type="similarity">
    <text evidence="2">Belongs to the CbiM family. NikM subfamily.</text>
</comment>
<comment type="sequence caution" evidence="2">
    <conflict type="erroneous initiation">
        <sequence resource="EMBL-CDS" id="AAB89410"/>
    </conflict>
    <text>Truncated N-terminus.</text>
</comment>
<dbReference type="EMBL" id="AE000782">
    <property type="protein sequence ID" value="AAB89410.1"/>
    <property type="status" value="ALT_INIT"/>
    <property type="molecule type" value="Genomic_DNA"/>
</dbReference>
<dbReference type="PIR" id="B69480">
    <property type="entry name" value="B69480"/>
</dbReference>
<dbReference type="RefSeq" id="WP_048064472.1">
    <property type="nucleotide sequence ID" value="NC_000917.1"/>
</dbReference>
<dbReference type="SMR" id="O28435"/>
<dbReference type="STRING" id="224325.AF_1843"/>
<dbReference type="PaxDb" id="224325-AF_1843"/>
<dbReference type="EnsemblBacteria" id="AAB89410">
    <property type="protein sequence ID" value="AAB89410"/>
    <property type="gene ID" value="AF_1843"/>
</dbReference>
<dbReference type="KEGG" id="afu:AF_1843"/>
<dbReference type="eggNOG" id="arCOG02248">
    <property type="taxonomic scope" value="Archaea"/>
</dbReference>
<dbReference type="HOGENOM" id="CLU_052508_0_1_2"/>
<dbReference type="OrthoDB" id="30946at2157"/>
<dbReference type="Proteomes" id="UP000002199">
    <property type="component" value="Chromosome"/>
</dbReference>
<dbReference type="GO" id="GO:0005886">
    <property type="term" value="C:plasma membrane"/>
    <property type="evidence" value="ECO:0007669"/>
    <property type="project" value="UniProtKB-SubCell"/>
</dbReference>
<dbReference type="GO" id="GO:0015675">
    <property type="term" value="P:nickel cation transport"/>
    <property type="evidence" value="ECO:0007669"/>
    <property type="project" value="UniProtKB-KW"/>
</dbReference>
<dbReference type="Gene3D" id="1.10.1760.20">
    <property type="match status" value="1"/>
</dbReference>
<dbReference type="InterPro" id="IPR002751">
    <property type="entry name" value="CbiM/NikMN"/>
</dbReference>
<dbReference type="InterPro" id="IPR025937">
    <property type="entry name" value="PDGLE_dom"/>
</dbReference>
<dbReference type="PANTHER" id="PTHR34229">
    <property type="entry name" value="METAL TRANSPORT PROTEIN HI_1621-RELATED"/>
    <property type="match status" value="1"/>
</dbReference>
<dbReference type="PANTHER" id="PTHR34229:SF1">
    <property type="entry name" value="METAL TRANSPORT PROTEIN HI_1621-RELATED"/>
    <property type="match status" value="1"/>
</dbReference>
<dbReference type="Pfam" id="PF01891">
    <property type="entry name" value="CbiM"/>
    <property type="match status" value="1"/>
</dbReference>
<dbReference type="Pfam" id="PF13190">
    <property type="entry name" value="PDGLE"/>
    <property type="match status" value="1"/>
</dbReference>
<proteinExistence type="inferred from homology"/>
<sequence>MHIPDGYLDLSIAGLFYILSIAVLGYSIYRLRGQKLTSLFGIVAAAIFAAQMLNWPIPGGTSAHFVGGALAGILLGPYAGALAMAVVLTIQCLVFADGGITALGANVWNMAIVNVFVGYYVYRAIERFNRSAAAFIAGWIGITLAAIFAGIEIGISTSFGYGLKVTLPVMGTWHALLGLVEGTITAGVVSYIAAARPDVIEQKAAPGKLALAVIAAMIAVSPLFAYAAELVGYSEPLENAAAMLGLEENPIYEGLLPDYTLPGLDPYAGTLIAGIVGTVIVLALGFALTRYARTA</sequence>
<reference key="1">
    <citation type="journal article" date="1997" name="Nature">
        <title>The complete genome sequence of the hyperthermophilic, sulphate-reducing archaeon Archaeoglobus fulgidus.</title>
        <authorList>
            <person name="Klenk H.-P."/>
            <person name="Clayton R.A."/>
            <person name="Tomb J.-F."/>
            <person name="White O."/>
            <person name="Nelson K.E."/>
            <person name="Ketchum K.A."/>
            <person name="Dodson R.J."/>
            <person name="Gwinn M.L."/>
            <person name="Hickey E.K."/>
            <person name="Peterson J.D."/>
            <person name="Richardson D.L."/>
            <person name="Kerlavage A.R."/>
            <person name="Graham D.E."/>
            <person name="Kyrpides N.C."/>
            <person name="Fleischmann R.D."/>
            <person name="Quackenbush J."/>
            <person name="Lee N.H."/>
            <person name="Sutton G.G."/>
            <person name="Gill S.R."/>
            <person name="Kirkness E.F."/>
            <person name="Dougherty B.A."/>
            <person name="McKenney K."/>
            <person name="Adams M.D."/>
            <person name="Loftus B.J."/>
            <person name="Peterson S.N."/>
            <person name="Reich C.I."/>
            <person name="McNeil L.K."/>
            <person name="Badger J.H."/>
            <person name="Glodek A."/>
            <person name="Zhou L."/>
            <person name="Overbeek R."/>
            <person name="Gocayne J.D."/>
            <person name="Weidman J.F."/>
            <person name="McDonald L.A."/>
            <person name="Utterback T.R."/>
            <person name="Cotton M.D."/>
            <person name="Spriggs T."/>
            <person name="Artiach P."/>
            <person name="Kaine B.P."/>
            <person name="Sykes S.M."/>
            <person name="Sadow P.W."/>
            <person name="D'Andrea K.P."/>
            <person name="Bowman C."/>
            <person name="Fujii C."/>
            <person name="Garland S.A."/>
            <person name="Mason T.M."/>
            <person name="Olsen G.J."/>
            <person name="Fraser C.M."/>
            <person name="Smith H.O."/>
            <person name="Woese C.R."/>
            <person name="Venter J.C."/>
        </authorList>
    </citation>
    <scope>NUCLEOTIDE SEQUENCE [LARGE SCALE GENOMIC DNA]</scope>
    <source>
        <strain>ATCC 49558 / DSM 4304 / JCM 9628 / NBRC 100126 / VC-16</strain>
    </source>
</reference>
<reference key="2">
    <citation type="journal article" date="2006" name="J. Bacteriol.">
        <title>Comparative and functional genomic analysis of prokaryotic nickel and cobalt uptake transporters: evidence for a novel group of ATP-binding cassette transporters.</title>
        <authorList>
            <person name="Rodionov D.A."/>
            <person name="Hebbeln P."/>
            <person name="Gelfand M.S."/>
            <person name="Eitinger T."/>
        </authorList>
    </citation>
    <scope>PREDICTION OF FUNCTION</scope>
    <source>
        <strain>ATCC BAA-309 / NBRC 16581 / SB1003</strain>
    </source>
</reference>